<feature type="chain" id="PRO_0000375672" description="Succinyl-diaminopimelate desuccinylase">
    <location>
        <begin position="1"/>
        <end position="402"/>
    </location>
</feature>
<feature type="active site" evidence="1">
    <location>
        <position position="90"/>
    </location>
</feature>
<feature type="active site" description="Proton acceptor" evidence="1">
    <location>
        <position position="155"/>
    </location>
</feature>
<feature type="binding site" evidence="1">
    <location>
        <position position="88"/>
    </location>
    <ligand>
        <name>Zn(2+)</name>
        <dbReference type="ChEBI" id="CHEBI:29105"/>
        <label>1</label>
    </ligand>
</feature>
<feature type="binding site" evidence="1">
    <location>
        <position position="121"/>
    </location>
    <ligand>
        <name>Zn(2+)</name>
        <dbReference type="ChEBI" id="CHEBI:29105"/>
        <label>1</label>
    </ligand>
</feature>
<feature type="binding site" evidence="1">
    <location>
        <position position="121"/>
    </location>
    <ligand>
        <name>Zn(2+)</name>
        <dbReference type="ChEBI" id="CHEBI:29105"/>
        <label>2</label>
    </ligand>
</feature>
<feature type="binding site" evidence="1">
    <location>
        <position position="156"/>
    </location>
    <ligand>
        <name>Zn(2+)</name>
        <dbReference type="ChEBI" id="CHEBI:29105"/>
        <label>2</label>
    </ligand>
</feature>
<feature type="binding site" evidence="1">
    <location>
        <position position="184"/>
    </location>
    <ligand>
        <name>Zn(2+)</name>
        <dbReference type="ChEBI" id="CHEBI:29105"/>
        <label>1</label>
    </ligand>
</feature>
<feature type="binding site" evidence="1">
    <location>
        <position position="374"/>
    </location>
    <ligand>
        <name>Zn(2+)</name>
        <dbReference type="ChEBI" id="CHEBI:29105"/>
        <label>2</label>
    </ligand>
</feature>
<accession>A5WD56</accession>
<gene>
    <name evidence="1" type="primary">dapE</name>
    <name type="ordered locus">PsycPRwf_0642</name>
</gene>
<reference key="1">
    <citation type="submission" date="2007-05" db="EMBL/GenBank/DDBJ databases">
        <title>Complete sequence of chromosome of Psychrobacter sp. PRwf-1.</title>
        <authorList>
            <consortium name="US DOE Joint Genome Institute"/>
            <person name="Copeland A."/>
            <person name="Lucas S."/>
            <person name="Lapidus A."/>
            <person name="Barry K."/>
            <person name="Detter J.C."/>
            <person name="Glavina del Rio T."/>
            <person name="Hammon N."/>
            <person name="Israni S."/>
            <person name="Dalin E."/>
            <person name="Tice H."/>
            <person name="Pitluck S."/>
            <person name="Chain P."/>
            <person name="Malfatti S."/>
            <person name="Shin M."/>
            <person name="Vergez L."/>
            <person name="Schmutz J."/>
            <person name="Larimer F."/>
            <person name="Land M."/>
            <person name="Hauser L."/>
            <person name="Kyrpides N."/>
            <person name="Kim E."/>
            <person name="Tiedje J."/>
            <person name="Richardson P."/>
        </authorList>
    </citation>
    <scope>NUCLEOTIDE SEQUENCE [LARGE SCALE GENOMIC DNA]</scope>
    <source>
        <strain>PRwf-1</strain>
    </source>
</reference>
<comment type="function">
    <text evidence="1">Catalyzes the hydrolysis of N-succinyl-L,L-diaminopimelic acid (SDAP), forming succinate and LL-2,6-diaminopimelate (DAP), an intermediate involved in the bacterial biosynthesis of lysine and meso-diaminopimelic acid, an essential component of bacterial cell walls.</text>
</comment>
<comment type="catalytic activity">
    <reaction evidence="1">
        <text>N-succinyl-(2S,6S)-2,6-diaminopimelate + H2O = (2S,6S)-2,6-diaminopimelate + succinate</text>
        <dbReference type="Rhea" id="RHEA:22608"/>
        <dbReference type="ChEBI" id="CHEBI:15377"/>
        <dbReference type="ChEBI" id="CHEBI:30031"/>
        <dbReference type="ChEBI" id="CHEBI:57609"/>
        <dbReference type="ChEBI" id="CHEBI:58087"/>
        <dbReference type="EC" id="3.5.1.18"/>
    </reaction>
</comment>
<comment type="cofactor">
    <cofactor evidence="1">
        <name>Zn(2+)</name>
        <dbReference type="ChEBI" id="CHEBI:29105"/>
    </cofactor>
    <cofactor evidence="1">
        <name>Co(2+)</name>
        <dbReference type="ChEBI" id="CHEBI:48828"/>
    </cofactor>
    <text evidence="1">Binds 2 Zn(2+) or Co(2+) ions per subunit.</text>
</comment>
<comment type="pathway">
    <text evidence="1">Amino-acid biosynthesis; L-lysine biosynthesis via DAP pathway; LL-2,6-diaminopimelate from (S)-tetrahydrodipicolinate (succinylase route): step 3/3.</text>
</comment>
<comment type="subunit">
    <text evidence="1">Homodimer.</text>
</comment>
<comment type="similarity">
    <text evidence="1">Belongs to the peptidase M20A family. DapE subfamily.</text>
</comment>
<dbReference type="EC" id="3.5.1.18" evidence="1"/>
<dbReference type="EMBL" id="CP000713">
    <property type="protein sequence ID" value="ABQ93597.1"/>
    <property type="molecule type" value="Genomic_DNA"/>
</dbReference>
<dbReference type="SMR" id="A5WD56"/>
<dbReference type="STRING" id="349106.PsycPRwf_0642"/>
<dbReference type="KEGG" id="prw:PsycPRwf_0642"/>
<dbReference type="eggNOG" id="COG0624">
    <property type="taxonomic scope" value="Bacteria"/>
</dbReference>
<dbReference type="HOGENOM" id="CLU_021802_4_0_6"/>
<dbReference type="UniPathway" id="UPA00034">
    <property type="reaction ID" value="UER00021"/>
</dbReference>
<dbReference type="GO" id="GO:0008777">
    <property type="term" value="F:acetylornithine deacetylase activity"/>
    <property type="evidence" value="ECO:0007669"/>
    <property type="project" value="TreeGrafter"/>
</dbReference>
<dbReference type="GO" id="GO:0050897">
    <property type="term" value="F:cobalt ion binding"/>
    <property type="evidence" value="ECO:0007669"/>
    <property type="project" value="UniProtKB-UniRule"/>
</dbReference>
<dbReference type="GO" id="GO:0009014">
    <property type="term" value="F:succinyl-diaminopimelate desuccinylase activity"/>
    <property type="evidence" value="ECO:0007669"/>
    <property type="project" value="UniProtKB-UniRule"/>
</dbReference>
<dbReference type="GO" id="GO:0008270">
    <property type="term" value="F:zinc ion binding"/>
    <property type="evidence" value="ECO:0007669"/>
    <property type="project" value="UniProtKB-UniRule"/>
</dbReference>
<dbReference type="GO" id="GO:0019877">
    <property type="term" value="P:diaminopimelate biosynthetic process"/>
    <property type="evidence" value="ECO:0007669"/>
    <property type="project" value="UniProtKB-UniRule"/>
</dbReference>
<dbReference type="GO" id="GO:0006526">
    <property type="term" value="P:L-arginine biosynthetic process"/>
    <property type="evidence" value="ECO:0007669"/>
    <property type="project" value="TreeGrafter"/>
</dbReference>
<dbReference type="GO" id="GO:0009089">
    <property type="term" value="P:lysine biosynthetic process via diaminopimelate"/>
    <property type="evidence" value="ECO:0007669"/>
    <property type="project" value="UniProtKB-UniRule"/>
</dbReference>
<dbReference type="CDD" id="cd03891">
    <property type="entry name" value="M20_DapE_proteobac"/>
    <property type="match status" value="1"/>
</dbReference>
<dbReference type="FunFam" id="3.30.70.360:FF:000011">
    <property type="entry name" value="Succinyl-diaminopimelate desuccinylase"/>
    <property type="match status" value="1"/>
</dbReference>
<dbReference type="FunFam" id="3.40.630.10:FF:000005">
    <property type="entry name" value="Succinyl-diaminopimelate desuccinylase"/>
    <property type="match status" value="1"/>
</dbReference>
<dbReference type="Gene3D" id="3.40.630.10">
    <property type="entry name" value="Zn peptidases"/>
    <property type="match status" value="2"/>
</dbReference>
<dbReference type="HAMAP" id="MF_01690">
    <property type="entry name" value="DapE"/>
    <property type="match status" value="1"/>
</dbReference>
<dbReference type="InterPro" id="IPR036264">
    <property type="entry name" value="Bact_exopeptidase_dim_dom"/>
</dbReference>
<dbReference type="InterPro" id="IPR005941">
    <property type="entry name" value="DapE_proteobac"/>
</dbReference>
<dbReference type="InterPro" id="IPR002933">
    <property type="entry name" value="Peptidase_M20"/>
</dbReference>
<dbReference type="InterPro" id="IPR011650">
    <property type="entry name" value="Peptidase_M20_dimer"/>
</dbReference>
<dbReference type="InterPro" id="IPR050072">
    <property type="entry name" value="Peptidase_M20A"/>
</dbReference>
<dbReference type="NCBIfam" id="TIGR01246">
    <property type="entry name" value="dapE_proteo"/>
    <property type="match status" value="1"/>
</dbReference>
<dbReference type="NCBIfam" id="NF009557">
    <property type="entry name" value="PRK13009.1"/>
    <property type="match status" value="1"/>
</dbReference>
<dbReference type="PANTHER" id="PTHR43808">
    <property type="entry name" value="ACETYLORNITHINE DEACETYLASE"/>
    <property type="match status" value="1"/>
</dbReference>
<dbReference type="PANTHER" id="PTHR43808:SF31">
    <property type="entry name" value="N-ACETYL-L-CITRULLINE DEACETYLASE"/>
    <property type="match status" value="1"/>
</dbReference>
<dbReference type="Pfam" id="PF07687">
    <property type="entry name" value="M20_dimer"/>
    <property type="match status" value="1"/>
</dbReference>
<dbReference type="Pfam" id="PF01546">
    <property type="entry name" value="Peptidase_M20"/>
    <property type="match status" value="1"/>
</dbReference>
<dbReference type="SUPFAM" id="SSF55031">
    <property type="entry name" value="Bacterial exopeptidase dimerisation domain"/>
    <property type="match status" value="1"/>
</dbReference>
<dbReference type="SUPFAM" id="SSF53187">
    <property type="entry name" value="Zn-dependent exopeptidases"/>
    <property type="match status" value="1"/>
</dbReference>
<name>DAPE_PSYWF</name>
<protein>
    <recommendedName>
        <fullName evidence="1">Succinyl-diaminopimelate desuccinylase</fullName>
        <shortName evidence="1">SDAP desuccinylase</shortName>
        <ecNumber evidence="1">3.5.1.18</ecNumber>
    </recommendedName>
    <alternativeName>
        <fullName evidence="1">N-succinyl-LL-2,6-diaminoheptanedioate amidohydrolase</fullName>
    </alternativeName>
</protein>
<sequence length="402" mass="43949">MHTSDPSNTATDHQQQTLELSIELMRRDSVTPHDKGCQEVLVERLSPLGFVHEFMYFGDEQASGRDAQVKNLWARRGNQDPVVCFAGHTDVVPTGNPDNWRIAPFDAKVHDGYLWGRGAADMKTGIAAFTVATERFVKNHPDHNGSIAMLITSDEEGPSINGTVKVIEVLEARNEKITYCLVGEPSSTDSLGDVIKNGRRGSLGGILTVTGKQGHVAYPHLAVNPIHALLPALAEFSVTEWDKGNDFFPATSMQISNINGGTGANNVIPETVEVVFNFRFSTETTEEELRAKTHEILDKHFANTEATYEIDWKLSGHPFLTAEGKLVDACKVAIKDITGTDTQLSTSGGTSDGRFIAPTGAQVVELGVRNATIHQVDERVEIDDIGKLAQIYERMLEELLLG</sequence>
<organism>
    <name type="scientific">Psychrobacter sp. (strain PRwf-1)</name>
    <dbReference type="NCBI Taxonomy" id="349106"/>
    <lineage>
        <taxon>Bacteria</taxon>
        <taxon>Pseudomonadati</taxon>
        <taxon>Pseudomonadota</taxon>
        <taxon>Gammaproteobacteria</taxon>
        <taxon>Moraxellales</taxon>
        <taxon>Moraxellaceae</taxon>
        <taxon>Psychrobacter</taxon>
    </lineage>
</organism>
<keyword id="KW-0028">Amino-acid biosynthesis</keyword>
<keyword id="KW-0170">Cobalt</keyword>
<keyword id="KW-0220">Diaminopimelate biosynthesis</keyword>
<keyword id="KW-0378">Hydrolase</keyword>
<keyword id="KW-0457">Lysine biosynthesis</keyword>
<keyword id="KW-0479">Metal-binding</keyword>
<keyword id="KW-0862">Zinc</keyword>
<evidence type="ECO:0000255" key="1">
    <source>
        <dbReference type="HAMAP-Rule" id="MF_01690"/>
    </source>
</evidence>
<proteinExistence type="inferred from homology"/>